<gene>
    <name evidence="1" type="primary">der</name>
    <name type="synonym">engA</name>
    <name type="ordered locus">SEN2499</name>
</gene>
<feature type="chain" id="PRO_1000099156" description="GTPase Der">
    <location>
        <begin position="1"/>
        <end position="490"/>
    </location>
</feature>
<feature type="domain" description="EngA-type G 1">
    <location>
        <begin position="3"/>
        <end position="166"/>
    </location>
</feature>
<feature type="domain" description="EngA-type G 2">
    <location>
        <begin position="203"/>
        <end position="376"/>
    </location>
</feature>
<feature type="domain" description="KH-like" evidence="1">
    <location>
        <begin position="377"/>
        <end position="461"/>
    </location>
</feature>
<feature type="binding site" evidence="1">
    <location>
        <begin position="9"/>
        <end position="16"/>
    </location>
    <ligand>
        <name>GTP</name>
        <dbReference type="ChEBI" id="CHEBI:37565"/>
        <label>1</label>
    </ligand>
</feature>
<feature type="binding site" evidence="1">
    <location>
        <begin position="56"/>
        <end position="60"/>
    </location>
    <ligand>
        <name>GTP</name>
        <dbReference type="ChEBI" id="CHEBI:37565"/>
        <label>1</label>
    </ligand>
</feature>
<feature type="binding site" evidence="1">
    <location>
        <begin position="118"/>
        <end position="121"/>
    </location>
    <ligand>
        <name>GTP</name>
        <dbReference type="ChEBI" id="CHEBI:37565"/>
        <label>1</label>
    </ligand>
</feature>
<feature type="binding site" evidence="1">
    <location>
        <begin position="209"/>
        <end position="216"/>
    </location>
    <ligand>
        <name>GTP</name>
        <dbReference type="ChEBI" id="CHEBI:37565"/>
        <label>2</label>
    </ligand>
</feature>
<feature type="binding site" evidence="1">
    <location>
        <begin position="256"/>
        <end position="260"/>
    </location>
    <ligand>
        <name>GTP</name>
        <dbReference type="ChEBI" id="CHEBI:37565"/>
        <label>2</label>
    </ligand>
</feature>
<feature type="binding site" evidence="1">
    <location>
        <begin position="321"/>
        <end position="324"/>
    </location>
    <ligand>
        <name>GTP</name>
        <dbReference type="ChEBI" id="CHEBI:37565"/>
        <label>2</label>
    </ligand>
</feature>
<dbReference type="EMBL" id="AM933172">
    <property type="protein sequence ID" value="CAR34082.1"/>
    <property type="molecule type" value="Genomic_DNA"/>
</dbReference>
<dbReference type="RefSeq" id="WP_000249415.1">
    <property type="nucleotide sequence ID" value="NC_011294.1"/>
</dbReference>
<dbReference type="SMR" id="B5R578"/>
<dbReference type="KEGG" id="set:SEN2499"/>
<dbReference type="HOGENOM" id="CLU_016077_5_1_6"/>
<dbReference type="Proteomes" id="UP000000613">
    <property type="component" value="Chromosome"/>
</dbReference>
<dbReference type="GO" id="GO:0005525">
    <property type="term" value="F:GTP binding"/>
    <property type="evidence" value="ECO:0007669"/>
    <property type="project" value="UniProtKB-UniRule"/>
</dbReference>
<dbReference type="GO" id="GO:0043022">
    <property type="term" value="F:ribosome binding"/>
    <property type="evidence" value="ECO:0007669"/>
    <property type="project" value="TreeGrafter"/>
</dbReference>
<dbReference type="GO" id="GO:0042254">
    <property type="term" value="P:ribosome biogenesis"/>
    <property type="evidence" value="ECO:0007669"/>
    <property type="project" value="UniProtKB-KW"/>
</dbReference>
<dbReference type="CDD" id="cd01894">
    <property type="entry name" value="EngA1"/>
    <property type="match status" value="1"/>
</dbReference>
<dbReference type="CDD" id="cd01895">
    <property type="entry name" value="EngA2"/>
    <property type="match status" value="1"/>
</dbReference>
<dbReference type="FunFam" id="3.30.300.20:FF:000004">
    <property type="entry name" value="GTPase Der"/>
    <property type="match status" value="1"/>
</dbReference>
<dbReference type="FunFam" id="3.40.50.300:FF:000040">
    <property type="entry name" value="GTPase Der"/>
    <property type="match status" value="1"/>
</dbReference>
<dbReference type="FunFam" id="3.40.50.300:FF:000057">
    <property type="entry name" value="GTPase Der"/>
    <property type="match status" value="1"/>
</dbReference>
<dbReference type="Gene3D" id="3.30.300.20">
    <property type="match status" value="1"/>
</dbReference>
<dbReference type="Gene3D" id="3.40.50.300">
    <property type="entry name" value="P-loop containing nucleotide triphosphate hydrolases"/>
    <property type="match status" value="2"/>
</dbReference>
<dbReference type="HAMAP" id="MF_00195">
    <property type="entry name" value="GTPase_Der"/>
    <property type="match status" value="1"/>
</dbReference>
<dbReference type="InterPro" id="IPR031166">
    <property type="entry name" value="G_ENGA"/>
</dbReference>
<dbReference type="InterPro" id="IPR006073">
    <property type="entry name" value="GTP-bd"/>
</dbReference>
<dbReference type="InterPro" id="IPR016484">
    <property type="entry name" value="GTPase_Der"/>
</dbReference>
<dbReference type="InterPro" id="IPR032859">
    <property type="entry name" value="KH_dom-like"/>
</dbReference>
<dbReference type="InterPro" id="IPR015946">
    <property type="entry name" value="KH_dom-like_a/b"/>
</dbReference>
<dbReference type="InterPro" id="IPR027417">
    <property type="entry name" value="P-loop_NTPase"/>
</dbReference>
<dbReference type="InterPro" id="IPR005225">
    <property type="entry name" value="Small_GTP-bd"/>
</dbReference>
<dbReference type="NCBIfam" id="TIGR03594">
    <property type="entry name" value="GTPase_EngA"/>
    <property type="match status" value="1"/>
</dbReference>
<dbReference type="NCBIfam" id="TIGR00231">
    <property type="entry name" value="small_GTP"/>
    <property type="match status" value="2"/>
</dbReference>
<dbReference type="PANTHER" id="PTHR43834">
    <property type="entry name" value="GTPASE DER"/>
    <property type="match status" value="1"/>
</dbReference>
<dbReference type="PANTHER" id="PTHR43834:SF6">
    <property type="entry name" value="GTPASE DER"/>
    <property type="match status" value="1"/>
</dbReference>
<dbReference type="Pfam" id="PF14714">
    <property type="entry name" value="KH_dom-like"/>
    <property type="match status" value="1"/>
</dbReference>
<dbReference type="Pfam" id="PF01926">
    <property type="entry name" value="MMR_HSR1"/>
    <property type="match status" value="2"/>
</dbReference>
<dbReference type="PIRSF" id="PIRSF006485">
    <property type="entry name" value="GTP-binding_EngA"/>
    <property type="match status" value="1"/>
</dbReference>
<dbReference type="PRINTS" id="PR00326">
    <property type="entry name" value="GTP1OBG"/>
</dbReference>
<dbReference type="SUPFAM" id="SSF52540">
    <property type="entry name" value="P-loop containing nucleoside triphosphate hydrolases"/>
    <property type="match status" value="2"/>
</dbReference>
<dbReference type="PROSITE" id="PS51712">
    <property type="entry name" value="G_ENGA"/>
    <property type="match status" value="2"/>
</dbReference>
<accession>B5R578</accession>
<comment type="function">
    <text evidence="1">GTPase that plays an essential role in the late steps of ribosome biogenesis.</text>
</comment>
<comment type="subunit">
    <text evidence="1">Associates with the 50S ribosomal subunit.</text>
</comment>
<comment type="similarity">
    <text evidence="1">Belongs to the TRAFAC class TrmE-Era-EngA-EngB-Septin-like GTPase superfamily. EngA (Der) GTPase family.</text>
</comment>
<keyword id="KW-0342">GTP-binding</keyword>
<keyword id="KW-0547">Nucleotide-binding</keyword>
<keyword id="KW-0677">Repeat</keyword>
<keyword id="KW-0690">Ribosome biogenesis</keyword>
<evidence type="ECO:0000255" key="1">
    <source>
        <dbReference type="HAMAP-Rule" id="MF_00195"/>
    </source>
</evidence>
<name>DER_SALEP</name>
<proteinExistence type="inferred from homology"/>
<organism>
    <name type="scientific">Salmonella enteritidis PT4 (strain P125109)</name>
    <dbReference type="NCBI Taxonomy" id="550537"/>
    <lineage>
        <taxon>Bacteria</taxon>
        <taxon>Pseudomonadati</taxon>
        <taxon>Pseudomonadota</taxon>
        <taxon>Gammaproteobacteria</taxon>
        <taxon>Enterobacterales</taxon>
        <taxon>Enterobacteriaceae</taxon>
        <taxon>Salmonella</taxon>
    </lineage>
</organism>
<protein>
    <recommendedName>
        <fullName evidence="1">GTPase Der</fullName>
    </recommendedName>
    <alternativeName>
        <fullName evidence="1">GTP-binding protein EngA</fullName>
    </alternativeName>
</protein>
<reference key="1">
    <citation type="journal article" date="2008" name="Genome Res.">
        <title>Comparative genome analysis of Salmonella enteritidis PT4 and Salmonella gallinarum 287/91 provides insights into evolutionary and host adaptation pathways.</title>
        <authorList>
            <person name="Thomson N.R."/>
            <person name="Clayton D.J."/>
            <person name="Windhorst D."/>
            <person name="Vernikos G."/>
            <person name="Davidson S."/>
            <person name="Churcher C."/>
            <person name="Quail M.A."/>
            <person name="Stevens M."/>
            <person name="Jones M.A."/>
            <person name="Watson M."/>
            <person name="Barron A."/>
            <person name="Layton A."/>
            <person name="Pickard D."/>
            <person name="Kingsley R.A."/>
            <person name="Bignell A."/>
            <person name="Clark L."/>
            <person name="Harris B."/>
            <person name="Ormond D."/>
            <person name="Abdellah Z."/>
            <person name="Brooks K."/>
            <person name="Cherevach I."/>
            <person name="Chillingworth T."/>
            <person name="Woodward J."/>
            <person name="Norberczak H."/>
            <person name="Lord A."/>
            <person name="Arrowsmith C."/>
            <person name="Jagels K."/>
            <person name="Moule S."/>
            <person name="Mungall K."/>
            <person name="Saunders M."/>
            <person name="Whitehead S."/>
            <person name="Chabalgoity J.A."/>
            <person name="Maskell D."/>
            <person name="Humphreys T."/>
            <person name="Roberts M."/>
            <person name="Barrow P.A."/>
            <person name="Dougan G."/>
            <person name="Parkhill J."/>
        </authorList>
    </citation>
    <scope>NUCLEOTIDE SEQUENCE [LARGE SCALE GENOMIC DNA]</scope>
    <source>
        <strain>P125109</strain>
    </source>
</reference>
<sequence length="490" mass="55000">MVPVVALVGRPNVGKSTLFNRLTRTRDALVADFPGLTRDRKYGRAEVEGREFICIDTGGIDGTEDGVETRMAEQSLLAIEEADVVLFMVDARAGLMPADEAIAKHLRSREKPTFLVANKTDGLDPDQAVVDFYSLGLGEIYPIAASHGRGVLSLLEHVLLPWMDDVAPQEEVDEDAEYWAQFEVEQNGEEAPEDDFDPQSLPIKLAIVGRPNVGKSTLTNRILGEERVVVYDMPGTTRDSIYIPMERDEREYVLIDTAGVRKRGKITDAVEKFSVIKTLQAIEDANVVLLVIDAREGISDQDLSLLGFILNSGRSLVIVVNKWDGLSQEVKEQVKETLDFRLGFIDFARVHFISALHGSGVGNLFESVREAYDSSTRRVSTAMLTRIMTMAVEDHQPPLVRGRRVKLKYAHAGGYNPPIVVIHGNQVKDLPDSYKRYLMNYFRKSLEVMGTPIRIQFKEGENPYANKRNTLTPTQMRKRKRLMKHIKKSK</sequence>